<reference key="1">
    <citation type="journal article" date="1999" name="Nature">
        <title>Genomic sequence comparison of two unrelated isolates of the human gastric pathogen Helicobacter pylori.</title>
        <authorList>
            <person name="Alm R.A."/>
            <person name="Ling L.-S.L."/>
            <person name="Moir D.T."/>
            <person name="King B.L."/>
            <person name="Brown E.D."/>
            <person name="Doig P.C."/>
            <person name="Smith D.R."/>
            <person name="Noonan B."/>
            <person name="Guild B.C."/>
            <person name="deJonge B.L."/>
            <person name="Carmel G."/>
            <person name="Tummino P.J."/>
            <person name="Caruso A."/>
            <person name="Uria-Nickelsen M."/>
            <person name="Mills D.M."/>
            <person name="Ives C."/>
            <person name="Gibson R."/>
            <person name="Merberg D."/>
            <person name="Mills S.D."/>
            <person name="Jiang Q."/>
            <person name="Taylor D.E."/>
            <person name="Vovis G.F."/>
            <person name="Trust T.J."/>
        </authorList>
    </citation>
    <scope>NUCLEOTIDE SEQUENCE [LARGE SCALE GENOMIC DNA]</scope>
    <source>
        <strain>J99 / ATCC 700824</strain>
    </source>
</reference>
<protein>
    <recommendedName>
        <fullName>Putative phosphate permease jhp_1384</fullName>
    </recommendedName>
</protein>
<accession>Q9ZJC8</accession>
<feature type="chain" id="PRO_0000080800" description="Putative phosphate permease jhp_1384">
    <location>
        <begin position="1"/>
        <end position="533"/>
    </location>
</feature>
<feature type="transmembrane region" description="Helical" evidence="1">
    <location>
        <begin position="23"/>
        <end position="43"/>
    </location>
</feature>
<feature type="transmembrane region" description="Helical" evidence="1">
    <location>
        <begin position="47"/>
        <end position="67"/>
    </location>
</feature>
<feature type="transmembrane region" description="Helical" evidence="1">
    <location>
        <begin position="81"/>
        <end position="101"/>
    </location>
</feature>
<feature type="transmembrane region" description="Helical" evidence="1">
    <location>
        <begin position="129"/>
        <end position="149"/>
    </location>
</feature>
<feature type="transmembrane region" description="Helical" evidence="1">
    <location>
        <begin position="156"/>
        <end position="176"/>
    </location>
</feature>
<feature type="transmembrane region" description="Helical" evidence="1">
    <location>
        <begin position="182"/>
        <end position="202"/>
    </location>
</feature>
<feature type="transmembrane region" description="Helical" evidence="1">
    <location>
        <begin position="221"/>
        <end position="241"/>
    </location>
</feature>
<feature type="transmembrane region" description="Helical" evidence="1">
    <location>
        <begin position="248"/>
        <end position="268"/>
    </location>
</feature>
<feature type="transmembrane region" description="Helical" evidence="1">
    <location>
        <begin position="286"/>
        <end position="306"/>
    </location>
</feature>
<feature type="transmembrane region" description="Helical" evidence="1">
    <location>
        <begin position="338"/>
        <end position="358"/>
    </location>
</feature>
<feature type="transmembrane region" description="Helical" evidence="1">
    <location>
        <begin position="372"/>
        <end position="392"/>
    </location>
</feature>
<feature type="transmembrane region" description="Helical" evidence="1">
    <location>
        <begin position="509"/>
        <end position="529"/>
    </location>
</feature>
<comment type="function">
    <text>Potential transporter for phosphate.</text>
</comment>
<comment type="subcellular location">
    <subcellularLocation>
        <location evidence="2">Cell membrane</location>
        <topology evidence="2">Multi-pass membrane protein</topology>
    </subcellularLocation>
</comment>
<comment type="similarity">
    <text evidence="2">Belongs to the inorganic phosphate transporter (PiT) (TC 2.A.20) family.</text>
</comment>
<sequence>MEIRNIKEFEKASKKLQKDTLKIALALLFLIGAALLALIFGQANSKGLLLIFAAVIGGYMAMNIGANDVSNNVGPAVGSKAISMGGAILIAAVCEMLGAIIAGGEVVSTIKGRIVSPEFINDAHVFINVMLASLLSGALWLHVATLIGAPVSTSHSVVGGIMGAGMAAAGMSAINWHFLSGIVASWVISPLMGALIAMFFLMLIKKTIAYKEDKKSAALKVVPYLVALMSLAFSWYLIVKVLKRLYAVGFEIQLACGCVLALLIFILFKRFVLKKAPQLENSHESVNELFNVPLIFAAALLSFAHGANDVANAIGPLAAISQTLEDASSPMGSTLNSVPLWIMVVGAAGIALGLSLYGPKLIKTVGSEITELDKMQAFCIALSAVITVLLASQLGLPVSSTHIVVGAVFGVGFLRERLREQSRRRFARIRDNIVAAHFGEDLEEIEGFLERFDKANLKEKSLMLESLKKSKNTAIALELKKKEKKSLKKVYKEEVIKRSILKKIVTAWLVTVPVSALLGALLFVALGFIEKYF</sequence>
<gene>
    <name type="ordered locus">jhp_1384</name>
</gene>
<organism>
    <name type="scientific">Helicobacter pylori (strain J99 / ATCC 700824)</name>
    <name type="common">Campylobacter pylori J99</name>
    <dbReference type="NCBI Taxonomy" id="85963"/>
    <lineage>
        <taxon>Bacteria</taxon>
        <taxon>Pseudomonadati</taxon>
        <taxon>Campylobacterota</taxon>
        <taxon>Epsilonproteobacteria</taxon>
        <taxon>Campylobacterales</taxon>
        <taxon>Helicobacteraceae</taxon>
        <taxon>Helicobacter</taxon>
    </lineage>
</organism>
<evidence type="ECO:0000255" key="1"/>
<evidence type="ECO:0000305" key="2"/>
<dbReference type="EMBL" id="AE001439">
    <property type="protein sequence ID" value="AAD06977.1"/>
    <property type="molecule type" value="Genomic_DNA"/>
</dbReference>
<dbReference type="PIR" id="A71812">
    <property type="entry name" value="A71812"/>
</dbReference>
<dbReference type="RefSeq" id="WP_000405913.1">
    <property type="nucleotide sequence ID" value="NC_000921.1"/>
</dbReference>
<dbReference type="SMR" id="Q9ZJC8"/>
<dbReference type="KEGG" id="hpj:jhp_1384"/>
<dbReference type="PATRIC" id="fig|85963.30.peg.1167"/>
<dbReference type="eggNOG" id="COG0306">
    <property type="taxonomic scope" value="Bacteria"/>
</dbReference>
<dbReference type="Proteomes" id="UP000000804">
    <property type="component" value="Chromosome"/>
</dbReference>
<dbReference type="GO" id="GO:0005886">
    <property type="term" value="C:plasma membrane"/>
    <property type="evidence" value="ECO:0007669"/>
    <property type="project" value="UniProtKB-SubCell"/>
</dbReference>
<dbReference type="GO" id="GO:0005315">
    <property type="term" value="F:phosphate transmembrane transporter activity"/>
    <property type="evidence" value="ECO:0007669"/>
    <property type="project" value="InterPro"/>
</dbReference>
<dbReference type="GO" id="GO:0035435">
    <property type="term" value="P:phosphate ion transmembrane transport"/>
    <property type="evidence" value="ECO:0007669"/>
    <property type="project" value="TreeGrafter"/>
</dbReference>
<dbReference type="InterPro" id="IPR001204">
    <property type="entry name" value="Phos_transporter"/>
</dbReference>
<dbReference type="PANTHER" id="PTHR11101">
    <property type="entry name" value="PHOSPHATE TRANSPORTER"/>
    <property type="match status" value="1"/>
</dbReference>
<dbReference type="PANTHER" id="PTHR11101:SF80">
    <property type="entry name" value="PHOSPHATE TRANSPORTER"/>
    <property type="match status" value="1"/>
</dbReference>
<dbReference type="Pfam" id="PF01384">
    <property type="entry name" value="PHO4"/>
    <property type="match status" value="1"/>
</dbReference>
<proteinExistence type="inferred from homology"/>
<keyword id="KW-1003">Cell membrane</keyword>
<keyword id="KW-0472">Membrane</keyword>
<keyword id="KW-0592">Phosphate transport</keyword>
<keyword id="KW-0812">Transmembrane</keyword>
<keyword id="KW-1133">Transmembrane helix</keyword>
<keyword id="KW-0813">Transport</keyword>
<name>YE91_HELPJ</name>